<evidence type="ECO:0000255" key="1">
    <source>
        <dbReference type="HAMAP-Rule" id="MF_01445"/>
    </source>
</evidence>
<gene>
    <name evidence="1" type="primary">tsaD</name>
    <name type="synonym">gcp</name>
    <name type="ordered locus">Wbm0217</name>
</gene>
<comment type="function">
    <text evidence="1">Required for the formation of a threonylcarbamoyl group on adenosine at position 37 (t(6)A37) in tRNAs that read codons beginning with adenine. Is involved in the transfer of the threonylcarbamoyl moiety of threonylcarbamoyl-AMP (TC-AMP) to the N6 group of A37, together with TsaE and TsaB. TsaD likely plays a direct catalytic role in this reaction.</text>
</comment>
<comment type="catalytic activity">
    <reaction evidence="1">
        <text>L-threonylcarbamoyladenylate + adenosine(37) in tRNA = N(6)-L-threonylcarbamoyladenosine(37) in tRNA + AMP + H(+)</text>
        <dbReference type="Rhea" id="RHEA:37059"/>
        <dbReference type="Rhea" id="RHEA-COMP:10162"/>
        <dbReference type="Rhea" id="RHEA-COMP:10163"/>
        <dbReference type="ChEBI" id="CHEBI:15378"/>
        <dbReference type="ChEBI" id="CHEBI:73682"/>
        <dbReference type="ChEBI" id="CHEBI:74411"/>
        <dbReference type="ChEBI" id="CHEBI:74418"/>
        <dbReference type="ChEBI" id="CHEBI:456215"/>
        <dbReference type="EC" id="2.3.1.234"/>
    </reaction>
</comment>
<comment type="cofactor">
    <cofactor evidence="1">
        <name>Fe(2+)</name>
        <dbReference type="ChEBI" id="CHEBI:29033"/>
    </cofactor>
    <text evidence="1">Binds 1 Fe(2+) ion per subunit.</text>
</comment>
<comment type="subcellular location">
    <subcellularLocation>
        <location evidence="1">Cytoplasm</location>
    </subcellularLocation>
</comment>
<comment type="similarity">
    <text evidence="1">Belongs to the KAE1 / TsaD family.</text>
</comment>
<protein>
    <recommendedName>
        <fullName evidence="1">tRNA N6-adenosine threonylcarbamoyltransferase</fullName>
        <ecNumber evidence="1">2.3.1.234</ecNumber>
    </recommendedName>
    <alternativeName>
        <fullName evidence="1">N6-L-threonylcarbamoyladenine synthase</fullName>
        <shortName evidence="1">t(6)A synthase</shortName>
    </alternativeName>
    <alternativeName>
        <fullName evidence="1">t(6)A37 threonylcarbamoyladenosine biosynthesis protein TsaD</fullName>
    </alternativeName>
    <alternativeName>
        <fullName evidence="1">tRNA threonylcarbamoyladenosine biosynthesis protein TsaD</fullName>
    </alternativeName>
</protein>
<organism>
    <name type="scientific">Wolbachia sp. subsp. Brugia malayi (strain TRS)</name>
    <dbReference type="NCBI Taxonomy" id="292805"/>
    <lineage>
        <taxon>Bacteria</taxon>
        <taxon>Pseudomonadati</taxon>
        <taxon>Pseudomonadota</taxon>
        <taxon>Alphaproteobacteria</taxon>
        <taxon>Rickettsiales</taxon>
        <taxon>Anaplasmataceae</taxon>
        <taxon>Wolbachieae</taxon>
        <taxon>Wolbachia</taxon>
    </lineage>
</organism>
<proteinExistence type="inferred from homology"/>
<feature type="chain" id="PRO_0000303613" description="tRNA N6-adenosine threonylcarbamoyltransferase">
    <location>
        <begin position="1"/>
        <end position="335"/>
    </location>
</feature>
<feature type="binding site" evidence="1">
    <location>
        <position position="111"/>
    </location>
    <ligand>
        <name>Fe cation</name>
        <dbReference type="ChEBI" id="CHEBI:24875"/>
    </ligand>
</feature>
<feature type="binding site" evidence="1">
    <location>
        <position position="115"/>
    </location>
    <ligand>
        <name>Fe cation</name>
        <dbReference type="ChEBI" id="CHEBI:24875"/>
    </ligand>
</feature>
<feature type="binding site" evidence="1">
    <location>
        <begin position="133"/>
        <end position="137"/>
    </location>
    <ligand>
        <name>substrate</name>
    </ligand>
</feature>
<feature type="binding site" evidence="1">
    <location>
        <position position="166"/>
    </location>
    <ligand>
        <name>substrate</name>
    </ligand>
</feature>
<feature type="binding site" evidence="1">
    <location>
        <position position="179"/>
    </location>
    <ligand>
        <name>substrate</name>
    </ligand>
</feature>
<feature type="binding site" evidence="1">
    <location>
        <position position="276"/>
    </location>
    <ligand>
        <name>substrate</name>
    </ligand>
</feature>
<feature type="binding site" evidence="1">
    <location>
        <position position="301"/>
    </location>
    <ligand>
        <name>Fe cation</name>
        <dbReference type="ChEBI" id="CHEBI:24875"/>
    </ligand>
</feature>
<keyword id="KW-0012">Acyltransferase</keyword>
<keyword id="KW-0963">Cytoplasm</keyword>
<keyword id="KW-0408">Iron</keyword>
<keyword id="KW-0479">Metal-binding</keyword>
<keyword id="KW-1185">Reference proteome</keyword>
<keyword id="KW-0808">Transferase</keyword>
<keyword id="KW-0819">tRNA processing</keyword>
<dbReference type="EC" id="2.3.1.234" evidence="1"/>
<dbReference type="EMBL" id="AE017321">
    <property type="protein sequence ID" value="AAW70808.1"/>
    <property type="molecule type" value="Genomic_DNA"/>
</dbReference>
<dbReference type="RefSeq" id="WP_011256418.1">
    <property type="nucleotide sequence ID" value="NC_006833.1"/>
</dbReference>
<dbReference type="SMR" id="Q5GT66"/>
<dbReference type="STRING" id="292805.Wbm0217"/>
<dbReference type="KEGG" id="wbm:Wbm0217"/>
<dbReference type="eggNOG" id="COG0533">
    <property type="taxonomic scope" value="Bacteria"/>
</dbReference>
<dbReference type="HOGENOM" id="CLU_023208_0_2_5"/>
<dbReference type="Proteomes" id="UP000000534">
    <property type="component" value="Chromosome"/>
</dbReference>
<dbReference type="GO" id="GO:0005737">
    <property type="term" value="C:cytoplasm"/>
    <property type="evidence" value="ECO:0007669"/>
    <property type="project" value="UniProtKB-SubCell"/>
</dbReference>
<dbReference type="GO" id="GO:0005506">
    <property type="term" value="F:iron ion binding"/>
    <property type="evidence" value="ECO:0007669"/>
    <property type="project" value="UniProtKB-UniRule"/>
</dbReference>
<dbReference type="GO" id="GO:0061711">
    <property type="term" value="F:N(6)-L-threonylcarbamoyladenine synthase activity"/>
    <property type="evidence" value="ECO:0007669"/>
    <property type="project" value="UniProtKB-EC"/>
</dbReference>
<dbReference type="GO" id="GO:0002949">
    <property type="term" value="P:tRNA threonylcarbamoyladenosine modification"/>
    <property type="evidence" value="ECO:0007669"/>
    <property type="project" value="UniProtKB-UniRule"/>
</dbReference>
<dbReference type="CDD" id="cd24133">
    <property type="entry name" value="ASKHA_NBD_TsaD_bac"/>
    <property type="match status" value="1"/>
</dbReference>
<dbReference type="FunFam" id="3.30.420.40:FF:000012">
    <property type="entry name" value="tRNA N6-adenosine threonylcarbamoyltransferase"/>
    <property type="match status" value="1"/>
</dbReference>
<dbReference type="FunFam" id="3.30.420.40:FF:000040">
    <property type="entry name" value="tRNA N6-adenosine threonylcarbamoyltransferase"/>
    <property type="match status" value="1"/>
</dbReference>
<dbReference type="Gene3D" id="3.30.420.40">
    <property type="match status" value="2"/>
</dbReference>
<dbReference type="HAMAP" id="MF_01445">
    <property type="entry name" value="TsaD"/>
    <property type="match status" value="1"/>
</dbReference>
<dbReference type="InterPro" id="IPR043129">
    <property type="entry name" value="ATPase_NBD"/>
</dbReference>
<dbReference type="InterPro" id="IPR000905">
    <property type="entry name" value="Gcp-like_dom"/>
</dbReference>
<dbReference type="InterPro" id="IPR017861">
    <property type="entry name" value="KAE1/TsaD"/>
</dbReference>
<dbReference type="InterPro" id="IPR022450">
    <property type="entry name" value="TsaD"/>
</dbReference>
<dbReference type="NCBIfam" id="TIGR00329">
    <property type="entry name" value="gcp_kae1"/>
    <property type="match status" value="1"/>
</dbReference>
<dbReference type="NCBIfam" id="TIGR03723">
    <property type="entry name" value="T6A_TsaD_YgjD"/>
    <property type="match status" value="1"/>
</dbReference>
<dbReference type="PANTHER" id="PTHR11735">
    <property type="entry name" value="TRNA N6-ADENOSINE THREONYLCARBAMOYLTRANSFERASE"/>
    <property type="match status" value="1"/>
</dbReference>
<dbReference type="PANTHER" id="PTHR11735:SF6">
    <property type="entry name" value="TRNA N6-ADENOSINE THREONYLCARBAMOYLTRANSFERASE, MITOCHONDRIAL"/>
    <property type="match status" value="1"/>
</dbReference>
<dbReference type="Pfam" id="PF00814">
    <property type="entry name" value="TsaD"/>
    <property type="match status" value="1"/>
</dbReference>
<dbReference type="PRINTS" id="PR00789">
    <property type="entry name" value="OSIALOPTASE"/>
</dbReference>
<dbReference type="SUPFAM" id="SSF53067">
    <property type="entry name" value="Actin-like ATPase domain"/>
    <property type="match status" value="2"/>
</dbReference>
<reference key="1">
    <citation type="journal article" date="2005" name="PLoS Biol.">
        <title>The Wolbachia genome of Brugia malayi: endosymbiont evolution within a human pathogenic nematode.</title>
        <authorList>
            <person name="Foster J."/>
            <person name="Ganatra M."/>
            <person name="Kamal I."/>
            <person name="Ware J."/>
            <person name="Makarova K."/>
            <person name="Ivanova N."/>
            <person name="Bhattacharyya A."/>
            <person name="Kapatral V."/>
            <person name="Kumar S."/>
            <person name="Posfai J."/>
            <person name="Vincze T."/>
            <person name="Ingram J."/>
            <person name="Moran L."/>
            <person name="Lapidus A."/>
            <person name="Omelchenko M."/>
            <person name="Kyrpides N."/>
            <person name="Ghedin E."/>
            <person name="Wang S."/>
            <person name="Goltsman E."/>
            <person name="Joukov V."/>
            <person name="Ostrovskaya O."/>
            <person name="Tsukerman K."/>
            <person name="Mazur M."/>
            <person name="Comb D."/>
            <person name="Koonin E."/>
            <person name="Slatko B."/>
        </authorList>
    </citation>
    <scope>NUCLEOTIDE SEQUENCE [LARGE SCALE GENOMIC DNA]</scope>
    <source>
        <strain>TRS</strain>
    </source>
</reference>
<name>TSAD_WOLTR</name>
<accession>Q5GT66</accession>
<sequence length="335" mass="36790">MKTILAVETSCDETAVAIVNSEKQVLAQEILSQTEHKKRGGVIPEIASRAHMEHLSSLIKNSIEKSNLNFCNLDATAATSGPGLIGGLIVGTMMAKAIAHVTQKPFIAVNHLEAHVLVIRLLYEVKFPFLVLLISGGHCQFLIAQNVGKYIKLGETLDDSLGEAFDKVARMLGLSYPGGPLIEKLAKKGNGTRFKLPRAMRKRPGCNFSFSGIKTAVKNLVQELEMSEQDVCDVCASFQECISEILLDRVKNAVIMAESLNIKINDFVVTGGVAANNFLRKKLKKHINLNILFPPINLCTDNAVMVGWTGIEILQKDYIDSLNFAPRPRWELGSY</sequence>